<gene>
    <name type="primary">COL6A1</name>
</gene>
<dbReference type="EMBL" id="X15879">
    <property type="protein sequence ID" value="CAA33888.1"/>
    <property type="molecule type" value="mRNA"/>
</dbReference>
<dbReference type="EMBL" id="X15880">
    <property type="protein sequence ID" value="CAA33889.1"/>
    <property type="molecule type" value="mRNA"/>
</dbReference>
<dbReference type="EMBL" id="BC005159">
    <property type="protein sequence ID" value="AAH05159.2"/>
    <property type="molecule type" value="mRNA"/>
</dbReference>
<dbReference type="EMBL" id="BC052575">
    <property type="protein sequence ID" value="AAH52575.1"/>
    <property type="molecule type" value="mRNA"/>
</dbReference>
<dbReference type="EMBL" id="X99109">
    <property type="protein sequence ID" value="CAA67559.1"/>
    <property type="molecule type" value="Genomic_DNA"/>
</dbReference>
<dbReference type="EMBL" id="X99135">
    <property type="protein sequence ID" value="CAA67576.1"/>
    <property type="molecule type" value="Genomic_DNA"/>
</dbReference>
<dbReference type="EMBL" id="X99136">
    <property type="protein sequence ID" value="CAA67576.1"/>
    <property type="status" value="JOINED"/>
    <property type="molecule type" value="Genomic_DNA"/>
</dbReference>
<dbReference type="EMBL" id="M20776">
    <property type="status" value="NOT_ANNOTATED_CDS"/>
    <property type="molecule type" value="mRNA"/>
</dbReference>
<dbReference type="EMBL" id="S75420">
    <property type="protein sequence ID" value="AAB20835.2"/>
    <property type="molecule type" value="Genomic_DNA"/>
</dbReference>
<dbReference type="EMBL" id="S75385">
    <property type="protein sequence ID" value="AAB20835.2"/>
    <property type="status" value="JOINED"/>
    <property type="molecule type" value="Genomic_DNA"/>
</dbReference>
<dbReference type="EMBL" id="S75388">
    <property type="protein sequence ID" value="AAB20835.2"/>
    <property type="status" value="JOINED"/>
    <property type="molecule type" value="Genomic_DNA"/>
</dbReference>
<dbReference type="EMBL" id="S75390">
    <property type="protein sequence ID" value="AAB20835.2"/>
    <property type="status" value="JOINED"/>
    <property type="molecule type" value="Genomic_DNA"/>
</dbReference>
<dbReference type="EMBL" id="S75392">
    <property type="protein sequence ID" value="AAB20835.2"/>
    <property type="status" value="JOINED"/>
    <property type="molecule type" value="Genomic_DNA"/>
</dbReference>
<dbReference type="EMBL" id="S75394">
    <property type="protein sequence ID" value="AAB20835.2"/>
    <property type="status" value="JOINED"/>
    <property type="molecule type" value="Genomic_DNA"/>
</dbReference>
<dbReference type="EMBL" id="S75396">
    <property type="protein sequence ID" value="AAB20835.2"/>
    <property type="status" value="JOINED"/>
    <property type="molecule type" value="Genomic_DNA"/>
</dbReference>
<dbReference type="EMBL" id="S75398">
    <property type="protein sequence ID" value="AAB20835.2"/>
    <property type="status" value="JOINED"/>
    <property type="molecule type" value="Genomic_DNA"/>
</dbReference>
<dbReference type="EMBL" id="S75400">
    <property type="protein sequence ID" value="AAB20835.2"/>
    <property type="status" value="JOINED"/>
    <property type="molecule type" value="Genomic_DNA"/>
</dbReference>
<dbReference type="EMBL" id="S75402">
    <property type="protein sequence ID" value="AAB20835.2"/>
    <property type="status" value="JOINED"/>
    <property type="molecule type" value="Genomic_DNA"/>
</dbReference>
<dbReference type="EMBL" id="S75404">
    <property type="protein sequence ID" value="AAB20835.2"/>
    <property type="status" value="JOINED"/>
    <property type="molecule type" value="Genomic_DNA"/>
</dbReference>
<dbReference type="EMBL" id="S75406">
    <property type="protein sequence ID" value="AAB20835.2"/>
    <property type="status" value="JOINED"/>
    <property type="molecule type" value="Genomic_DNA"/>
</dbReference>
<dbReference type="EMBL" id="S75408">
    <property type="protein sequence ID" value="AAB20835.2"/>
    <property type="status" value="JOINED"/>
    <property type="molecule type" value="Genomic_DNA"/>
</dbReference>
<dbReference type="EMBL" id="S75410">
    <property type="protein sequence ID" value="AAB20835.2"/>
    <property type="status" value="JOINED"/>
    <property type="molecule type" value="Genomic_DNA"/>
</dbReference>
<dbReference type="EMBL" id="S75412">
    <property type="protein sequence ID" value="AAB20835.2"/>
    <property type="status" value="JOINED"/>
    <property type="molecule type" value="Genomic_DNA"/>
</dbReference>
<dbReference type="EMBL" id="S75414">
    <property type="protein sequence ID" value="AAB20835.2"/>
    <property type="status" value="JOINED"/>
    <property type="molecule type" value="Genomic_DNA"/>
</dbReference>
<dbReference type="EMBL" id="S75416">
    <property type="protein sequence ID" value="AAB20835.2"/>
    <property type="status" value="JOINED"/>
    <property type="molecule type" value="Genomic_DNA"/>
</dbReference>
<dbReference type="EMBL" id="S75418">
    <property type="protein sequence ID" value="AAB20835.2"/>
    <property type="status" value="JOINED"/>
    <property type="molecule type" value="Genomic_DNA"/>
</dbReference>
<dbReference type="EMBL" id="X06194">
    <property type="protein sequence ID" value="CAA29555.1"/>
    <property type="molecule type" value="mRNA"/>
</dbReference>
<dbReference type="EMBL" id="M27447">
    <property type="protein sequence ID" value="AAA52055.1"/>
    <property type="molecule type" value="mRNA"/>
</dbReference>
<dbReference type="CCDS" id="CCDS13727.1"/>
<dbReference type="PIR" id="S05377">
    <property type="entry name" value="CGHU1A"/>
</dbReference>
<dbReference type="RefSeq" id="NP_001839.2">
    <property type="nucleotide sequence ID" value="NM_001848.3"/>
</dbReference>
<dbReference type="EMDB" id="EMD-18689"/>
<dbReference type="SMR" id="P12109"/>
<dbReference type="BioGRID" id="107688">
    <property type="interactions" value="143"/>
</dbReference>
<dbReference type="ComplexPortal" id="CPX-1736">
    <property type="entry name" value="Collagen type VI trimer"/>
</dbReference>
<dbReference type="FunCoup" id="P12109">
    <property type="interactions" value="604"/>
</dbReference>
<dbReference type="IntAct" id="P12109">
    <property type="interactions" value="85"/>
</dbReference>
<dbReference type="MINT" id="P12109"/>
<dbReference type="STRING" id="9606.ENSP00000355180"/>
<dbReference type="ChEMBL" id="CHEMBL2364188"/>
<dbReference type="GlyConnect" id="1129">
    <property type="glycosylation" value="30 N-Linked glycans (3 sites)"/>
</dbReference>
<dbReference type="GlyCosmos" id="P12109">
    <property type="glycosylation" value="7 sites, 30 glycans"/>
</dbReference>
<dbReference type="GlyGen" id="P12109">
    <property type="glycosylation" value="10 sites, 80 N-linked glycans (4 sites), 2 O-linked glycans (3 sites)"/>
</dbReference>
<dbReference type="iPTMnet" id="P12109"/>
<dbReference type="MetOSite" id="P12109"/>
<dbReference type="PhosphoSitePlus" id="P12109"/>
<dbReference type="SwissPalm" id="P12109"/>
<dbReference type="BioMuta" id="COL6A1"/>
<dbReference type="DMDM" id="125987811"/>
<dbReference type="REPRODUCTION-2DPAGE" id="IPI00291136"/>
<dbReference type="REPRODUCTION-2DPAGE" id="P12109"/>
<dbReference type="jPOST" id="P12109"/>
<dbReference type="MassIVE" id="P12109"/>
<dbReference type="PaxDb" id="9606-ENSP00000355180"/>
<dbReference type="PeptideAtlas" id="P12109"/>
<dbReference type="ProteomicsDB" id="52829"/>
<dbReference type="Pumba" id="P12109"/>
<dbReference type="Antibodypedia" id="10507">
    <property type="antibodies" value="381 antibodies from 40 providers"/>
</dbReference>
<dbReference type="DNASU" id="1291"/>
<dbReference type="Ensembl" id="ENST00000361866.8">
    <property type="protein sequence ID" value="ENSP00000355180.3"/>
    <property type="gene ID" value="ENSG00000142156.16"/>
</dbReference>
<dbReference type="GeneID" id="1291"/>
<dbReference type="KEGG" id="hsa:1291"/>
<dbReference type="MANE-Select" id="ENST00000361866.8">
    <property type="protein sequence ID" value="ENSP00000355180.3"/>
    <property type="RefSeq nucleotide sequence ID" value="NM_001848.3"/>
    <property type="RefSeq protein sequence ID" value="NP_001839.2"/>
</dbReference>
<dbReference type="UCSC" id="uc002zhu.2">
    <property type="organism name" value="human"/>
</dbReference>
<dbReference type="AGR" id="HGNC:2211"/>
<dbReference type="CTD" id="1291"/>
<dbReference type="DisGeNET" id="1291"/>
<dbReference type="GeneCards" id="COL6A1"/>
<dbReference type="GeneReviews" id="COL6A1"/>
<dbReference type="HGNC" id="HGNC:2211">
    <property type="gene designation" value="COL6A1"/>
</dbReference>
<dbReference type="HPA" id="ENSG00000142156">
    <property type="expression patterns" value="Tissue enhanced (intestine)"/>
</dbReference>
<dbReference type="MalaCards" id="COL6A1"/>
<dbReference type="MIM" id="120220">
    <property type="type" value="gene"/>
</dbReference>
<dbReference type="MIM" id="158810">
    <property type="type" value="phenotype"/>
</dbReference>
<dbReference type="MIM" id="254090">
    <property type="type" value="phenotype"/>
</dbReference>
<dbReference type="neXtProt" id="NX_P12109"/>
<dbReference type="OpenTargets" id="ENSG00000142156"/>
<dbReference type="Orphanet" id="610">
    <property type="disease" value="Bethlem muscular dystrophy"/>
</dbReference>
<dbReference type="Orphanet" id="646113">
    <property type="disease" value="Intermediate collagen VI-related muscular dystrophy"/>
</dbReference>
<dbReference type="Orphanet" id="75840">
    <property type="disease" value="Ullrich congenital muscular dystrophy"/>
</dbReference>
<dbReference type="PharmGKB" id="PA26727"/>
<dbReference type="VEuPathDB" id="HostDB:ENSG00000142156"/>
<dbReference type="eggNOG" id="KOG3544">
    <property type="taxonomic scope" value="Eukaryota"/>
</dbReference>
<dbReference type="GeneTree" id="ENSGT00940000162889"/>
<dbReference type="HOGENOM" id="CLU_009158_1_0_1"/>
<dbReference type="InParanoid" id="P12109"/>
<dbReference type="OMA" id="QEKKCPD"/>
<dbReference type="OrthoDB" id="8889285at2759"/>
<dbReference type="PAN-GO" id="P12109">
    <property type="GO annotations" value="2 GO annotations based on evolutionary models"/>
</dbReference>
<dbReference type="PhylomeDB" id="P12109"/>
<dbReference type="TreeFam" id="TF331207"/>
<dbReference type="PathwayCommons" id="P12109"/>
<dbReference type="Reactome" id="R-HSA-1442490">
    <property type="pathway name" value="Collagen degradation"/>
</dbReference>
<dbReference type="Reactome" id="R-HSA-1650814">
    <property type="pathway name" value="Collagen biosynthesis and modifying enzymes"/>
</dbReference>
<dbReference type="Reactome" id="R-HSA-186797">
    <property type="pathway name" value="Signaling by PDGF"/>
</dbReference>
<dbReference type="Reactome" id="R-HSA-2022090">
    <property type="pathway name" value="Assembly of collagen fibrils and other multimeric structures"/>
</dbReference>
<dbReference type="Reactome" id="R-HSA-216083">
    <property type="pathway name" value="Integrin cell surface interactions"/>
</dbReference>
<dbReference type="Reactome" id="R-HSA-3000178">
    <property type="pathway name" value="ECM proteoglycans"/>
</dbReference>
<dbReference type="Reactome" id="R-HSA-419037">
    <property type="pathway name" value="NCAM1 interactions"/>
</dbReference>
<dbReference type="Reactome" id="R-HSA-8948216">
    <property type="pathway name" value="Collagen chain trimerization"/>
</dbReference>
<dbReference type="SignaLink" id="P12109"/>
<dbReference type="SIGNOR" id="P12109"/>
<dbReference type="BioGRID-ORCS" id="1291">
    <property type="hits" value="25 hits in 1161 CRISPR screens"/>
</dbReference>
<dbReference type="ChiTaRS" id="COL6A1">
    <property type="organism name" value="human"/>
</dbReference>
<dbReference type="GeneWiki" id="Collagen,_type_VI,_alpha_1"/>
<dbReference type="GenomeRNAi" id="1291"/>
<dbReference type="Pharos" id="P12109">
    <property type="development level" value="Tbio"/>
</dbReference>
<dbReference type="PRO" id="PR:P12109"/>
<dbReference type="Proteomes" id="UP000005640">
    <property type="component" value="Chromosome 21"/>
</dbReference>
<dbReference type="RNAct" id="P12109">
    <property type="molecule type" value="protein"/>
</dbReference>
<dbReference type="Bgee" id="ENSG00000142156">
    <property type="expression patterns" value="Expressed in stromal cell of endometrium and 205 other cell types or tissues"/>
</dbReference>
<dbReference type="ExpressionAtlas" id="P12109">
    <property type="expression patterns" value="baseline and differential"/>
</dbReference>
<dbReference type="GO" id="GO:0005604">
    <property type="term" value="C:basement membrane"/>
    <property type="evidence" value="ECO:0007669"/>
    <property type="project" value="Ensembl"/>
</dbReference>
<dbReference type="GO" id="GO:0005589">
    <property type="term" value="C:collagen type VI trimer"/>
    <property type="evidence" value="ECO:0000304"/>
    <property type="project" value="GO_Central"/>
</dbReference>
<dbReference type="GO" id="GO:0062023">
    <property type="term" value="C:collagen-containing extracellular matrix"/>
    <property type="evidence" value="ECO:0007005"/>
    <property type="project" value="UniProtKB"/>
</dbReference>
<dbReference type="GO" id="GO:0005788">
    <property type="term" value="C:endoplasmic reticulum lumen"/>
    <property type="evidence" value="ECO:0000304"/>
    <property type="project" value="Reactome"/>
</dbReference>
<dbReference type="GO" id="GO:0070062">
    <property type="term" value="C:extracellular exosome"/>
    <property type="evidence" value="ECO:0007005"/>
    <property type="project" value="UniProtKB"/>
</dbReference>
<dbReference type="GO" id="GO:0005576">
    <property type="term" value="C:extracellular region"/>
    <property type="evidence" value="ECO:0000314"/>
    <property type="project" value="MGI"/>
</dbReference>
<dbReference type="GO" id="GO:0097708">
    <property type="term" value="C:intracellular vesicle"/>
    <property type="evidence" value="ECO:0007669"/>
    <property type="project" value="Ensembl"/>
</dbReference>
<dbReference type="GO" id="GO:0005765">
    <property type="term" value="C:lysosomal membrane"/>
    <property type="evidence" value="ECO:0007005"/>
    <property type="project" value="UniProtKB"/>
</dbReference>
<dbReference type="GO" id="GO:0016020">
    <property type="term" value="C:membrane"/>
    <property type="evidence" value="ECO:0007005"/>
    <property type="project" value="UniProtKB"/>
</dbReference>
<dbReference type="GO" id="GO:0005739">
    <property type="term" value="C:mitochondrion"/>
    <property type="evidence" value="ECO:0007669"/>
    <property type="project" value="GOC"/>
</dbReference>
<dbReference type="GO" id="GO:0030016">
    <property type="term" value="C:myofibril"/>
    <property type="evidence" value="ECO:0007669"/>
    <property type="project" value="Ensembl"/>
</dbReference>
<dbReference type="GO" id="GO:0032991">
    <property type="term" value="C:protein-containing complex"/>
    <property type="evidence" value="ECO:0000353"/>
    <property type="project" value="MGI"/>
</dbReference>
<dbReference type="GO" id="GO:0042383">
    <property type="term" value="C:sarcolemma"/>
    <property type="evidence" value="ECO:0007669"/>
    <property type="project" value="Ensembl"/>
</dbReference>
<dbReference type="GO" id="GO:0016529">
    <property type="term" value="C:sarcoplasmic reticulum"/>
    <property type="evidence" value="ECO:0007669"/>
    <property type="project" value="Ensembl"/>
</dbReference>
<dbReference type="GO" id="GO:0005518">
    <property type="term" value="F:collagen binding"/>
    <property type="evidence" value="ECO:0000353"/>
    <property type="project" value="MGI"/>
</dbReference>
<dbReference type="GO" id="GO:0030020">
    <property type="term" value="F:extracellular matrix structural constituent conferring tensile strength"/>
    <property type="evidence" value="ECO:0000250"/>
    <property type="project" value="BHF-UCL"/>
</dbReference>
<dbReference type="GO" id="GO:0048407">
    <property type="term" value="F:platelet-derived growth factor binding"/>
    <property type="evidence" value="ECO:0000314"/>
    <property type="project" value="MGI"/>
</dbReference>
<dbReference type="GO" id="GO:0006103">
    <property type="term" value="P:2-oxoglutarate metabolic process"/>
    <property type="evidence" value="ECO:0007669"/>
    <property type="project" value="Ensembl"/>
</dbReference>
<dbReference type="GO" id="GO:0060612">
    <property type="term" value="P:adipose tissue development"/>
    <property type="evidence" value="ECO:0007669"/>
    <property type="project" value="Ensembl"/>
</dbReference>
<dbReference type="GO" id="GO:0030262">
    <property type="term" value="P:apoptotic nuclear changes"/>
    <property type="evidence" value="ECO:0007669"/>
    <property type="project" value="Ensembl"/>
</dbReference>
<dbReference type="GO" id="GO:0006914">
    <property type="term" value="P:autophagy"/>
    <property type="evidence" value="ECO:0007669"/>
    <property type="project" value="Ensembl"/>
</dbReference>
<dbReference type="GO" id="GO:0071711">
    <property type="term" value="P:basement membrane organization"/>
    <property type="evidence" value="ECO:0007669"/>
    <property type="project" value="Ensembl"/>
</dbReference>
<dbReference type="GO" id="GO:0060348">
    <property type="term" value="P:bone development"/>
    <property type="evidence" value="ECO:0007669"/>
    <property type="project" value="Ensembl"/>
</dbReference>
<dbReference type="GO" id="GO:0030282">
    <property type="term" value="P:bone mineralization"/>
    <property type="evidence" value="ECO:0007669"/>
    <property type="project" value="Ensembl"/>
</dbReference>
<dbReference type="GO" id="GO:0060070">
    <property type="term" value="P:canonical Wnt signaling pathway"/>
    <property type="evidence" value="ECO:0007669"/>
    <property type="project" value="Ensembl"/>
</dbReference>
<dbReference type="GO" id="GO:0051216">
    <property type="term" value="P:cartilage development"/>
    <property type="evidence" value="ECO:0007669"/>
    <property type="project" value="Ensembl"/>
</dbReference>
<dbReference type="GO" id="GO:0070836">
    <property type="term" value="P:caveola assembly"/>
    <property type="evidence" value="ECO:0007669"/>
    <property type="project" value="Ensembl"/>
</dbReference>
<dbReference type="GO" id="GO:0007155">
    <property type="term" value="P:cell adhesion"/>
    <property type="evidence" value="ECO:0007669"/>
    <property type="project" value="UniProtKB-KW"/>
</dbReference>
<dbReference type="GO" id="GO:0000902">
    <property type="term" value="P:cell morphogenesis"/>
    <property type="evidence" value="ECO:0007669"/>
    <property type="project" value="Ensembl"/>
</dbReference>
<dbReference type="GO" id="GO:0071230">
    <property type="term" value="P:cellular response to amino acid stimulus"/>
    <property type="evidence" value="ECO:0007669"/>
    <property type="project" value="Ensembl"/>
</dbReference>
<dbReference type="GO" id="GO:0007623">
    <property type="term" value="P:circadian rhythm"/>
    <property type="evidence" value="ECO:0007669"/>
    <property type="project" value="Ensembl"/>
</dbReference>
<dbReference type="GO" id="GO:0030199">
    <property type="term" value="P:collagen fibril organization"/>
    <property type="evidence" value="ECO:0007669"/>
    <property type="project" value="Ensembl"/>
</dbReference>
<dbReference type="GO" id="GO:0032963">
    <property type="term" value="P:collagen metabolic process"/>
    <property type="evidence" value="ECO:0007669"/>
    <property type="project" value="Ensembl"/>
</dbReference>
<dbReference type="GO" id="GO:0035987">
    <property type="term" value="P:endodermal cell differentiation"/>
    <property type="evidence" value="ECO:0000270"/>
    <property type="project" value="UniProtKB"/>
</dbReference>
<dbReference type="GO" id="GO:0006112">
    <property type="term" value="P:energy reserve metabolic process"/>
    <property type="evidence" value="ECO:0007669"/>
    <property type="project" value="Ensembl"/>
</dbReference>
<dbReference type="GO" id="GO:0085029">
    <property type="term" value="P:extracellular matrix assembly"/>
    <property type="evidence" value="ECO:0007669"/>
    <property type="project" value="Ensembl"/>
</dbReference>
<dbReference type="GO" id="GO:0070341">
    <property type="term" value="P:fat cell proliferation"/>
    <property type="evidence" value="ECO:0007669"/>
    <property type="project" value="Ensembl"/>
</dbReference>
<dbReference type="GO" id="GO:0010467">
    <property type="term" value="P:gene expression"/>
    <property type="evidence" value="ECO:0007669"/>
    <property type="project" value="Ensembl"/>
</dbReference>
<dbReference type="GO" id="GO:0006096">
    <property type="term" value="P:glycolytic process"/>
    <property type="evidence" value="ECO:0007669"/>
    <property type="project" value="Ensembl"/>
</dbReference>
<dbReference type="GO" id="GO:0001942">
    <property type="term" value="P:hair follicle development"/>
    <property type="evidence" value="ECO:0007669"/>
    <property type="project" value="Ensembl"/>
</dbReference>
<dbReference type="GO" id="GO:0007507">
    <property type="term" value="P:heart development"/>
    <property type="evidence" value="ECO:0007669"/>
    <property type="project" value="Ensembl"/>
</dbReference>
<dbReference type="GO" id="GO:0048872">
    <property type="term" value="P:homeostasis of number of cells"/>
    <property type="evidence" value="ECO:0007669"/>
    <property type="project" value="Ensembl"/>
</dbReference>
<dbReference type="GO" id="GO:0006954">
    <property type="term" value="P:inflammatory response"/>
    <property type="evidence" value="ECO:0007669"/>
    <property type="project" value="Ensembl"/>
</dbReference>
<dbReference type="GO" id="GO:0008286">
    <property type="term" value="P:insulin receptor signaling pathway"/>
    <property type="evidence" value="ECO:0007669"/>
    <property type="project" value="Ensembl"/>
</dbReference>
<dbReference type="GO" id="GO:0048009">
    <property type="term" value="P:insulin-like growth factor receptor signaling pathway"/>
    <property type="evidence" value="ECO:0007669"/>
    <property type="project" value="Ensembl"/>
</dbReference>
<dbReference type="GO" id="GO:0036022">
    <property type="term" value="P:limb joint morphogenesis"/>
    <property type="evidence" value="ECO:0007669"/>
    <property type="project" value="Ensembl"/>
</dbReference>
<dbReference type="GO" id="GO:0048286">
    <property type="term" value="P:lung alveolus development"/>
    <property type="evidence" value="ECO:0007669"/>
    <property type="project" value="Ensembl"/>
</dbReference>
<dbReference type="GO" id="GO:0060487">
    <property type="term" value="P:lung epithelial cell differentiation"/>
    <property type="evidence" value="ECO:0007669"/>
    <property type="project" value="Ensembl"/>
</dbReference>
<dbReference type="GO" id="GO:0060425">
    <property type="term" value="P:lung morphogenesis"/>
    <property type="evidence" value="ECO:0007669"/>
    <property type="project" value="Ensembl"/>
</dbReference>
<dbReference type="GO" id="GO:0051882">
    <property type="term" value="P:mitochondrial depolarization"/>
    <property type="evidence" value="ECO:0007669"/>
    <property type="project" value="Ensembl"/>
</dbReference>
<dbReference type="GO" id="GO:1990542">
    <property type="term" value="P:mitochondrial transmembrane transport"/>
    <property type="evidence" value="ECO:0007669"/>
    <property type="project" value="Ensembl"/>
</dbReference>
<dbReference type="GO" id="GO:0007005">
    <property type="term" value="P:mitochondrion organization"/>
    <property type="evidence" value="ECO:0007669"/>
    <property type="project" value="Ensembl"/>
</dbReference>
<dbReference type="GO" id="GO:0071965">
    <property type="term" value="P:multicellular organismal locomotion"/>
    <property type="evidence" value="ECO:0007669"/>
    <property type="project" value="Ensembl"/>
</dbReference>
<dbReference type="GO" id="GO:0010657">
    <property type="term" value="P:muscle cell apoptotic process"/>
    <property type="evidence" value="ECO:0007669"/>
    <property type="project" value="Ensembl"/>
</dbReference>
<dbReference type="GO" id="GO:0003012">
    <property type="term" value="P:muscle system process"/>
    <property type="evidence" value="ECO:0007669"/>
    <property type="project" value="Ensembl"/>
</dbReference>
<dbReference type="GO" id="GO:0022011">
    <property type="term" value="P:myelination in peripheral nervous system"/>
    <property type="evidence" value="ECO:0007669"/>
    <property type="project" value="Ensembl"/>
</dbReference>
<dbReference type="GO" id="GO:0051402">
    <property type="term" value="P:neuron apoptotic process"/>
    <property type="evidence" value="ECO:0007669"/>
    <property type="project" value="Ensembl"/>
</dbReference>
<dbReference type="GO" id="GO:0001649">
    <property type="term" value="P:osteoblast differentiation"/>
    <property type="evidence" value="ECO:0007005"/>
    <property type="project" value="UniProtKB"/>
</dbReference>
<dbReference type="GO" id="GO:0043491">
    <property type="term" value="P:phosphatidylinositol 3-kinase/protein kinase B signal transduction"/>
    <property type="evidence" value="ECO:0007669"/>
    <property type="project" value="Ensembl"/>
</dbReference>
<dbReference type="GO" id="GO:0051262">
    <property type="term" value="P:protein tetramerization"/>
    <property type="evidence" value="ECO:0007669"/>
    <property type="project" value="Ensembl"/>
</dbReference>
<dbReference type="GO" id="GO:0072593">
    <property type="term" value="P:reactive oxygen species metabolic process"/>
    <property type="evidence" value="ECO:0007669"/>
    <property type="project" value="Ensembl"/>
</dbReference>
<dbReference type="GO" id="GO:0002023">
    <property type="term" value="P:reduction of food intake in response to dietary excess"/>
    <property type="evidence" value="ECO:0007669"/>
    <property type="project" value="Ensembl"/>
</dbReference>
<dbReference type="GO" id="GO:0008361">
    <property type="term" value="P:regulation of cell size"/>
    <property type="evidence" value="ECO:0007669"/>
    <property type="project" value="Ensembl"/>
</dbReference>
<dbReference type="GO" id="GO:1904026">
    <property type="term" value="P:regulation of collagen fibril organization"/>
    <property type="evidence" value="ECO:0007669"/>
    <property type="project" value="Ensembl"/>
</dbReference>
<dbReference type="GO" id="GO:0003016">
    <property type="term" value="P:respiratory system process"/>
    <property type="evidence" value="ECO:0007669"/>
    <property type="project" value="Ensembl"/>
</dbReference>
<dbReference type="GO" id="GO:1904975">
    <property type="term" value="P:response to bleomycin"/>
    <property type="evidence" value="ECO:0007669"/>
    <property type="project" value="Ensembl"/>
</dbReference>
<dbReference type="GO" id="GO:0036293">
    <property type="term" value="P:response to decreased oxygen levels"/>
    <property type="evidence" value="ECO:0007669"/>
    <property type="project" value="Ensembl"/>
</dbReference>
<dbReference type="GO" id="GO:0032496">
    <property type="term" value="P:response to lipopolysaccharide"/>
    <property type="evidence" value="ECO:0007669"/>
    <property type="project" value="Ensembl"/>
</dbReference>
<dbReference type="GO" id="GO:0009612">
    <property type="term" value="P:response to mechanical stimulus"/>
    <property type="evidence" value="ECO:0007669"/>
    <property type="project" value="Ensembl"/>
</dbReference>
<dbReference type="GO" id="GO:0014850">
    <property type="term" value="P:response to muscle activity"/>
    <property type="evidence" value="ECO:0007669"/>
    <property type="project" value="Ensembl"/>
</dbReference>
<dbReference type="GO" id="GO:0048265">
    <property type="term" value="P:response to pain"/>
    <property type="evidence" value="ECO:0007669"/>
    <property type="project" value="Ensembl"/>
</dbReference>
<dbReference type="GO" id="GO:1901652">
    <property type="term" value="P:response to peptide"/>
    <property type="evidence" value="ECO:0007669"/>
    <property type="project" value="Ensembl"/>
</dbReference>
<dbReference type="GO" id="GO:1904583">
    <property type="term" value="P:response to polyamine macromolecule"/>
    <property type="evidence" value="ECO:0007669"/>
    <property type="project" value="Ensembl"/>
</dbReference>
<dbReference type="GO" id="GO:0000302">
    <property type="term" value="P:response to reactive oxygen species"/>
    <property type="evidence" value="ECO:0007669"/>
    <property type="project" value="Ensembl"/>
</dbReference>
<dbReference type="GO" id="GO:0009636">
    <property type="term" value="P:response to toxic substance"/>
    <property type="evidence" value="ECO:0007669"/>
    <property type="project" value="Ensembl"/>
</dbReference>
<dbReference type="GO" id="GO:0009411">
    <property type="term" value="P:response to UV"/>
    <property type="evidence" value="ECO:0007669"/>
    <property type="project" value="Ensembl"/>
</dbReference>
<dbReference type="GO" id="GO:0009611">
    <property type="term" value="P:response to wounding"/>
    <property type="evidence" value="ECO:0007669"/>
    <property type="project" value="Ensembl"/>
</dbReference>
<dbReference type="GO" id="GO:0009410">
    <property type="term" value="P:response to xenobiotic stimulus"/>
    <property type="evidence" value="ECO:0007669"/>
    <property type="project" value="Ensembl"/>
</dbReference>
<dbReference type="GO" id="GO:0050954">
    <property type="term" value="P:sensory perception of mechanical stimulus"/>
    <property type="evidence" value="ECO:0007669"/>
    <property type="project" value="Ensembl"/>
</dbReference>
<dbReference type="GO" id="GO:0007338">
    <property type="term" value="P:single fertilization"/>
    <property type="evidence" value="ECO:0007669"/>
    <property type="project" value="Ensembl"/>
</dbReference>
<dbReference type="GO" id="GO:0048741">
    <property type="term" value="P:skeletal muscle fiber development"/>
    <property type="evidence" value="ECO:0007669"/>
    <property type="project" value="Ensembl"/>
</dbReference>
<dbReference type="GO" id="GO:0098528">
    <property type="term" value="P:skeletal muscle fiber differentiation"/>
    <property type="evidence" value="ECO:0007669"/>
    <property type="project" value="Ensembl"/>
</dbReference>
<dbReference type="GO" id="GO:0048630">
    <property type="term" value="P:skeletal muscle tissue growth"/>
    <property type="evidence" value="ECO:0007669"/>
    <property type="project" value="Ensembl"/>
</dbReference>
<dbReference type="GO" id="GO:0043403">
    <property type="term" value="P:skeletal muscle tissue regeneration"/>
    <property type="evidence" value="ECO:0007669"/>
    <property type="project" value="Ensembl"/>
</dbReference>
<dbReference type="GO" id="GO:0048771">
    <property type="term" value="P:tissue remodeling"/>
    <property type="evidence" value="ECO:0007669"/>
    <property type="project" value="Ensembl"/>
</dbReference>
<dbReference type="GO" id="GO:0019226">
    <property type="term" value="P:transmission of nerve impulse"/>
    <property type="evidence" value="ECO:0007669"/>
    <property type="project" value="Ensembl"/>
</dbReference>
<dbReference type="GO" id="GO:0006099">
    <property type="term" value="P:tricarboxylic acid cycle"/>
    <property type="evidence" value="ECO:0007669"/>
    <property type="project" value="Ensembl"/>
</dbReference>
<dbReference type="GO" id="GO:0060065">
    <property type="term" value="P:uterus development"/>
    <property type="evidence" value="ECO:0007669"/>
    <property type="project" value="Ensembl"/>
</dbReference>
<dbReference type="CDD" id="cd01480">
    <property type="entry name" value="vWA_collagen_alpha_1-VI-type"/>
    <property type="match status" value="3"/>
</dbReference>
<dbReference type="FunFam" id="3.40.50.410:FF:000026">
    <property type="entry name" value="Collagen, type VI, alpha 1"/>
    <property type="match status" value="1"/>
</dbReference>
<dbReference type="FunFam" id="3.40.50.410:FF:000050">
    <property type="entry name" value="Collagen, type VI, alpha 1"/>
    <property type="match status" value="1"/>
</dbReference>
<dbReference type="FunFam" id="3.40.50.410:FF:000060">
    <property type="entry name" value="Collagen, type VI, alpha 1"/>
    <property type="match status" value="1"/>
</dbReference>
<dbReference type="Gene3D" id="3.40.50.410">
    <property type="entry name" value="von Willebrand factor, type A domain"/>
    <property type="match status" value="3"/>
</dbReference>
<dbReference type="InterPro" id="IPR008160">
    <property type="entry name" value="Collagen"/>
</dbReference>
<dbReference type="InterPro" id="IPR050525">
    <property type="entry name" value="ECM_Assembly_Org"/>
</dbReference>
<dbReference type="InterPro" id="IPR002035">
    <property type="entry name" value="VWF_A"/>
</dbReference>
<dbReference type="InterPro" id="IPR036465">
    <property type="entry name" value="vWFA_dom_sf"/>
</dbReference>
<dbReference type="PANTHER" id="PTHR24020">
    <property type="entry name" value="COLLAGEN ALPHA"/>
    <property type="match status" value="1"/>
</dbReference>
<dbReference type="PANTHER" id="PTHR24020:SF87">
    <property type="entry name" value="COLLAGEN ALPHA-1(VI) CHAIN-LIKE"/>
    <property type="match status" value="1"/>
</dbReference>
<dbReference type="Pfam" id="PF01391">
    <property type="entry name" value="Collagen"/>
    <property type="match status" value="5"/>
</dbReference>
<dbReference type="Pfam" id="PF00092">
    <property type="entry name" value="VWA"/>
    <property type="match status" value="3"/>
</dbReference>
<dbReference type="PRINTS" id="PR00453">
    <property type="entry name" value="VWFADOMAIN"/>
</dbReference>
<dbReference type="SMART" id="SM00327">
    <property type="entry name" value="VWA"/>
    <property type="match status" value="3"/>
</dbReference>
<dbReference type="SUPFAM" id="SSF53300">
    <property type="entry name" value="vWA-like"/>
    <property type="match status" value="3"/>
</dbReference>
<dbReference type="PROSITE" id="PS50234">
    <property type="entry name" value="VWFA"/>
    <property type="match status" value="3"/>
</dbReference>
<feature type="signal peptide">
    <location>
        <begin position="1"/>
        <end position="19"/>
    </location>
</feature>
<feature type="chain" id="PRO_0000005758" description="Collagen alpha-1(VI) chain">
    <location>
        <begin position="20"/>
        <end position="1028"/>
    </location>
</feature>
<feature type="domain" description="VWFA 1" evidence="3">
    <location>
        <begin position="37"/>
        <end position="235"/>
    </location>
</feature>
<feature type="domain" description="VWFA 2" evidence="3">
    <location>
        <begin position="615"/>
        <end position="805"/>
    </location>
</feature>
<feature type="domain" description="VWFA 3" evidence="3">
    <location>
        <begin position="829"/>
        <end position="1021"/>
    </location>
</feature>
<feature type="region of interest" description="N-terminal globular domain">
    <location>
        <begin position="20"/>
        <end position="256"/>
    </location>
</feature>
<feature type="region of interest" description="Disordered" evidence="4">
    <location>
        <begin position="254"/>
        <end position="590"/>
    </location>
</feature>
<feature type="region of interest" description="Triple-helical region">
    <location>
        <begin position="257"/>
        <end position="592"/>
    </location>
</feature>
<feature type="region of interest" description="C-terminal globular domain">
    <location>
        <begin position="593"/>
        <end position="1028"/>
    </location>
</feature>
<feature type="short sequence motif" description="Cell attachment site">
    <location>
        <begin position="262"/>
        <end position="264"/>
    </location>
</feature>
<feature type="short sequence motif" description="Cell attachment site">
    <location>
        <begin position="442"/>
        <end position="444"/>
    </location>
</feature>
<feature type="short sequence motif" description="Cell attachment site">
    <location>
        <begin position="478"/>
        <end position="480"/>
    </location>
</feature>
<feature type="compositionally biased region" description="Basic and acidic residues" evidence="4">
    <location>
        <begin position="268"/>
        <end position="285"/>
    </location>
</feature>
<feature type="compositionally biased region" description="Basic and acidic residues" evidence="4">
    <location>
        <begin position="301"/>
        <end position="334"/>
    </location>
</feature>
<feature type="compositionally biased region" description="Low complexity" evidence="4">
    <location>
        <begin position="384"/>
        <end position="394"/>
    </location>
</feature>
<feature type="compositionally biased region" description="Low complexity" evidence="4">
    <location>
        <begin position="457"/>
        <end position="471"/>
    </location>
</feature>
<feature type="compositionally biased region" description="Low complexity" evidence="4">
    <location>
        <begin position="483"/>
        <end position="493"/>
    </location>
</feature>
<feature type="compositionally biased region" description="Acidic residues" evidence="4">
    <location>
        <begin position="550"/>
        <end position="560"/>
    </location>
</feature>
<feature type="compositionally biased region" description="Pro residues" evidence="4">
    <location>
        <begin position="579"/>
        <end position="590"/>
    </location>
</feature>
<feature type="glycosylation site" description="N-linked (GlcNAc...) asparagine" evidence="10">
    <location>
        <position position="212"/>
    </location>
</feature>
<feature type="glycosylation site" description="N-linked (GlcNAc...) asparagine" evidence="10">
    <location>
        <position position="516"/>
    </location>
</feature>
<feature type="glycosylation site" description="N-linked (GlcNAc...) asparagine" evidence="2">
    <location>
        <position position="537"/>
    </location>
</feature>
<feature type="glycosylation site" description="N-linked (GlcNAc...) asparagine" evidence="10">
    <location>
        <position position="804"/>
    </location>
</feature>
<feature type="glycosylation site" description="N-linked (GlcNAc...) asparagine" evidence="10">
    <location>
        <position position="896"/>
    </location>
</feature>
<feature type="sequence variant" id="VAR_081097" description="Found in a patient with limb-girdle muscular dystrophy; uncertain significance; dbSNP:rs786205555." evidence="11">
    <original>D</original>
    <variation>A</variation>
    <location>
        <position position="43"/>
    </location>
</feature>
<feature type="sequence variant" id="VAR_058213" description="In dbSNP:rs11553519." evidence="6 8">
    <original>S</original>
    <variation>N</variation>
    <location>
        <position position="116"/>
    </location>
</feature>
<feature type="sequence variant" id="VAR_013580" description="In BTHLM1A; dbSNP:rs121912936." evidence="5">
    <original>K</original>
    <variation>R</variation>
    <location>
        <position position="121"/>
    </location>
</feature>
<feature type="sequence variant" id="VAR_058214" description="In BTHLM1A; dbSNP:rs1064793840." evidence="7">
    <original>G</original>
    <variation>D</variation>
    <location>
        <position position="272"/>
    </location>
</feature>
<feature type="sequence variant" id="VAR_058215" description="In BTHLM1A; dbSNP:rs201093313." evidence="6">
    <original>P</original>
    <variation>L</variation>
    <location>
        <position position="274"/>
    </location>
</feature>
<feature type="sequence variant" id="VAR_058216" description="In BTHLM1A; dbSNP:rs1556425467." evidence="7">
    <original>G</original>
    <variation>R</variation>
    <location>
        <position position="275"/>
    </location>
</feature>
<feature type="sequence variant" id="VAR_058217" description="In UCMD1A; dbSNP:rs267606746." evidence="6">
    <original>G</original>
    <variation>R</variation>
    <location>
        <position position="281"/>
    </location>
</feature>
<feature type="sequence variant" id="VAR_058218" description="In UCMD1A; fibroblasts with the mutation assembled and secreted normal collagen VI microfibrils; cell adhesion of heterozygous Arg-284 fibroblasts is markedly decreased but can be rescued by the addition of normal collagen VI; dbSNP:rs121912938." evidence="6 8 9">
    <original>G</original>
    <variation>R</variation>
    <location>
        <position position="284"/>
    </location>
</feature>
<feature type="sequence variant" id="VAR_058219" description="In BTHLM1A and UCMD1A; dbSNP:rs121912939." evidence="6 7 8">
    <original>G</original>
    <variation>R</variation>
    <location>
        <position position="290"/>
    </location>
</feature>
<feature type="sequence variant" id="VAR_013581" description="In BTHLM1A." evidence="12">
    <original>G</original>
    <variation>V</variation>
    <location>
        <position position="305"/>
    </location>
</feature>
<feature type="sequence variant" id="VAR_058220" description="In dbSNP:rs11701912.">
    <original>G</original>
    <variation>S</variation>
    <location>
        <position position="332"/>
    </location>
</feature>
<feature type="sequence variant" id="VAR_013582" description="In BTHLM1A; dbSNP:rs121912935." evidence="5">
    <original>G</original>
    <variation>D</variation>
    <location>
        <position position="341"/>
    </location>
</feature>
<feature type="sequence variant" id="VAR_058221" description="In BTHLM1A; dbSNP:rs121912935." evidence="6 7">
    <original>G</original>
    <variation>V</variation>
    <location>
        <position position="341"/>
    </location>
</feature>
<feature type="sequence variant" id="VAR_048763" description="In dbSNP:rs35059000.">
    <original>R</original>
    <variation>Q</variation>
    <location>
        <position position="439"/>
    </location>
</feature>
<feature type="sequence variant" id="VAR_058222" description="In BTHLM1A; uncertain significance; dbSNP:rs751040647." evidence="6">
    <original>K</original>
    <variation>T</variation>
    <location>
        <position position="571"/>
    </location>
</feature>
<feature type="sequence variant" id="VAR_048764" description="In dbSNP:rs1053312." evidence="6">
    <original>R</original>
    <variation>H</variation>
    <location>
        <position position="850"/>
    </location>
</feature>
<feature type="sequence variant" id="VAR_058223" description="In dbSNP:rs150432347." evidence="6">
    <original>T</original>
    <variation>M</variation>
    <location>
        <position position="881"/>
    </location>
</feature>
<feature type="sequence variant" id="VAR_058224" description="In dbSNP:rs13051496." evidence="6 8">
    <original>S</original>
    <variation>L</variation>
    <location>
        <position position="890"/>
    </location>
</feature>
<feature type="sequence conflict" description="In Ref. 6; M20776 and 7; AAB20835." evidence="13" ref="6 7">
    <original>SS</original>
    <variation>AR</variation>
    <location>
        <begin position="387"/>
        <end position="388"/>
    </location>
</feature>
<feature type="sequence conflict" description="In Ref. 6; M20776 and 7; AAB20835." evidence="13" ref="6 7">
    <original>QP</original>
    <variation>PA</variation>
    <location>
        <begin position="396"/>
        <end position="397"/>
    </location>
</feature>
<feature type="sequence conflict" description="In Ref. 6; M20776." evidence="13" ref="6">
    <original>T</original>
    <variation>P</variation>
    <location>
        <position position="438"/>
    </location>
</feature>
<feature type="sequence conflict" description="In Ref. 1; CAA33889." evidence="13" ref="1">
    <original>DGSAS</original>
    <variation>EPPPD</variation>
    <location>
        <begin position="835"/>
        <end position="839"/>
    </location>
</feature>
<feature type="sequence conflict" description="In Ref. 4; CAA67576." evidence="13" ref="4">
    <original>A</original>
    <variation>P</variation>
    <location>
        <position position="997"/>
    </location>
</feature>
<organism>
    <name type="scientific">Homo sapiens</name>
    <name type="common">Human</name>
    <dbReference type="NCBI Taxonomy" id="9606"/>
    <lineage>
        <taxon>Eukaryota</taxon>
        <taxon>Metazoa</taxon>
        <taxon>Chordata</taxon>
        <taxon>Craniata</taxon>
        <taxon>Vertebrata</taxon>
        <taxon>Euteleostomi</taxon>
        <taxon>Mammalia</taxon>
        <taxon>Eutheria</taxon>
        <taxon>Euarchontoglires</taxon>
        <taxon>Primates</taxon>
        <taxon>Haplorrhini</taxon>
        <taxon>Catarrhini</taxon>
        <taxon>Hominidae</taxon>
        <taxon>Homo</taxon>
    </lineage>
</organism>
<protein>
    <recommendedName>
        <fullName>Collagen alpha-1(VI) chain</fullName>
    </recommendedName>
</protein>
<evidence type="ECO:0000250" key="1"/>
<evidence type="ECO:0000255" key="2"/>
<evidence type="ECO:0000255" key="3">
    <source>
        <dbReference type="PROSITE-ProRule" id="PRU00219"/>
    </source>
</evidence>
<evidence type="ECO:0000256" key="4">
    <source>
        <dbReference type="SAM" id="MobiDB-lite"/>
    </source>
</evidence>
<evidence type="ECO:0000269" key="5">
    <source>
    </source>
</evidence>
<evidence type="ECO:0000269" key="6">
    <source>
    </source>
</evidence>
<evidence type="ECO:0000269" key="7">
    <source>
    </source>
</evidence>
<evidence type="ECO:0000269" key="8">
    <source>
    </source>
</evidence>
<evidence type="ECO:0000269" key="9">
    <source>
    </source>
</evidence>
<evidence type="ECO:0000269" key="10">
    <source>
    </source>
</evidence>
<evidence type="ECO:0000269" key="11">
    <source>
    </source>
</evidence>
<evidence type="ECO:0000269" key="12">
    <source>
    </source>
</evidence>
<evidence type="ECO:0000305" key="13"/>
<keyword id="KW-0130">Cell adhesion</keyword>
<keyword id="KW-0176">Collagen</keyword>
<keyword id="KW-0912">Congenital muscular dystrophy</keyword>
<keyword id="KW-0903">Direct protein sequencing</keyword>
<keyword id="KW-0225">Disease variant</keyword>
<keyword id="KW-0272">Extracellular matrix</keyword>
<keyword id="KW-0325">Glycoprotein</keyword>
<keyword id="KW-0379">Hydroxylation</keyword>
<keyword id="KW-1267">Proteomics identification</keyword>
<keyword id="KW-1185">Reference proteome</keyword>
<keyword id="KW-0677">Repeat</keyword>
<keyword id="KW-0964">Secreted</keyword>
<keyword id="KW-0732">Signal</keyword>
<sequence>MRAARALLPLLLQACWTAAQDEPETPRAVAFQDCPVDLFFVLDTSESVALRLKPYGALVDKVKSFTKRFIDNLRDRYYRCDRNLVWNAGALHYSDEVEIIQGLTRMPGGRDALKSSVDAVKYFGKGTYTDCAIKKGLEQLLVGGSHLKENKYLIVVTDGHPLEGYKEPCGGLEDAVNEAKHLGVKVFSVAITPDHLEPRLSIIATDHTYRRNFTAADWGQSRDAEEAISQTIDTIVDMIKNNVEQVCCSFECQPARGPPGLRGDPGFEGERGKPGLPGEKGEAGDPGRPGDLGPVGYQGMKGEKGSRGEKGSRGPKGYKGEKGKRGIDGVDGVKGEMGYPGLPGCKGSPGFDGIQGPPGPKGDPGAFGLKGEKGEPGADGEAGRPGSSGPSGDEGQPGEPGPPGEKGEAGDEGNPGPDGAPGERGGPGERGPRGTPGTRGPRGDPGEAGPQGDQGREGPVGVPGDPGEAGPIGPKGYRGDEGPPGSEGARGAPGPAGPPGDPGLMGERGEDGPAGNGTEGFPGFPGYPGNRGAPGINGTKGYPGLKGDEGEAGDPGDDNNDIAPRGVKGAKGYRGPEGPQGPPGHQGPPGPDECEILDIIMKMCSCCECKCGPIDLLFVLDSSESIGLQNFEIAKDFVVKVIDRLSRDELVKFEPGQSYAGVVQYSHSQMQEHVSLRSPSIRNVQELKEAIKSLQWMAGGTFTGEALQYTRDQLLPPSPNNRIALVITDGRSDTQRDTTPLNVLCSPGIQVVSVGIKDVFDFIPGSDQLNVISCQGLAPSQGRPGLSLVKENYAELLEDAFLKNVTAQICIDKKCPDYTCPITFSSPADITILLDGSASVGSHNFDTTKRFAKRLAERFLTAGRTDPAHDVRVAVVQYSGTGQQRPERASLQFLQNYTALASAVDAMDFINDATDVNDALGYVTRFYREASSGAAKKRLLLFSDGNSQGATPAAIEKAVQEAQRAGIEIFVVVVGRQVNEPHIRVLVTGKTAEYDVAYGESHLFRVPSYQALLRGVFHQTVSRKVALG</sequence>
<reference key="1">
    <citation type="journal article" date="1989" name="EMBO J.">
        <title>Sequence analysis of alpha 1(VI) and alpha 2(VI) chains of human type VI collagen reveals internal triplication of globular domains similar to the A domains of von Willebrand factor and two alpha 2(VI) chain variants that differ in the carboxy terminus.</title>
        <authorList>
            <person name="Chu M.-L."/>
            <person name="Pan T.-C."/>
            <person name="Conway D."/>
            <person name="Kuo H.J."/>
            <person name="Glanville R.W."/>
            <person name="Timpl R."/>
            <person name="Mann K."/>
            <person name="Deutzmann R."/>
        </authorList>
    </citation>
    <scope>NUCLEOTIDE SEQUENCE [MRNA]</scope>
    <scope>PARTIAL PROTEIN SEQUENCE</scope>
    <source>
        <tissue>Fibroblast</tissue>
    </source>
</reference>
<reference key="2">
    <citation type="journal article" date="2004" name="Genome Res.">
        <title>The status, quality, and expansion of the NIH full-length cDNA project: the Mammalian Gene Collection (MGC).</title>
        <authorList>
            <consortium name="The MGC Project Team"/>
        </authorList>
    </citation>
    <scope>NUCLEOTIDE SEQUENCE [LARGE SCALE MRNA]</scope>
    <source>
        <tissue>Kidney</tissue>
        <tissue>Ovary</tissue>
    </source>
</reference>
<reference key="3">
    <citation type="journal article" date="1994" name="Eur. J. Biochem.">
        <title>Recombinant expression and structural and binding properties of alpha 1(VI) and alpha 2(VI) chains of human collagen type VI.</title>
        <authorList>
            <person name="Tillet E."/>
            <person name="Wiedemann H."/>
            <person name="Golbik R."/>
            <person name="Pan T.-C."/>
            <person name="Zhang R.Z."/>
            <person name="Mann K."/>
            <person name="Chu M.-L."/>
            <person name="Timpl R."/>
        </authorList>
    </citation>
    <scope>NUCLEOTIDE SEQUENCE [MRNA] OF 1-380 AND 383-1028</scope>
</reference>
<reference key="4">
    <citation type="journal article" date="1997" name="Mamm. Genome">
        <title>Human COL6A1: genomic characterization of the globular domains, structural and evolutionary comparison with COL6A2.</title>
        <authorList>
            <person name="Trikka D."/>
            <person name="Davis T."/>
            <person name="Lapenta V."/>
            <person name="Brahe C."/>
            <person name="Kessling A.M."/>
        </authorList>
    </citation>
    <scope>NUCLEOTIDE SEQUENCE [GENOMIC DNA] OF 144-268 AND 593-1028</scope>
</reference>
<reference key="5">
    <citation type="journal article" date="1983" name="Eur. J. Biochem.">
        <title>Further characterization of the three polypeptide chains of bovine and human short-chain collagen (intima collagen).</title>
        <authorList>
            <person name="Jander R."/>
            <person name="Rauterberg J."/>
            <person name="Glanville R.W."/>
        </authorList>
    </citation>
    <scope>PROTEIN SEQUENCE OF 246-258</scope>
</reference>
<reference key="6">
    <citation type="journal article" date="1988" name="J. Biol. Chem.">
        <title>Amino acid sequence of the triple-helical domain of human collagen type VI.</title>
        <authorList>
            <person name="Chu M.-L."/>
            <person name="Conway D."/>
            <person name="Pan T.-C."/>
            <person name="Baldwin C."/>
            <person name="Mann K."/>
            <person name="Deutzmann R."/>
            <person name="Timpl R."/>
        </authorList>
    </citation>
    <scope>NUCLEOTIDE SEQUENCE [MRNA] OF 257-592</scope>
</reference>
<reference key="7">
    <citation type="journal article" date="1991" name="Genomics">
        <title>The exon organization of the triple-helical coding regions of the human alpha 1(VI) and alpha 2(VI) collagen genes is highly similar.</title>
        <authorList>
            <person name="Saitta B."/>
            <person name="Wang Y.-M."/>
            <person name="Renkart L."/>
            <person name="Zhang R.-Z."/>
            <person name="Pan T.-C."/>
            <person name="Timpl R."/>
            <person name="Chu M.-L."/>
        </authorList>
    </citation>
    <scope>NUCLEOTIDE SEQUENCE [GENOMIC DNA] OF 287-592</scope>
</reference>
<reference key="8">
    <citation type="journal article" date="1987" name="Eur. J. Biochem.">
        <title>Characterization of three constituent chains of collagen type VI by peptide sequences and cDNA clones.</title>
        <authorList>
            <person name="Chu M.-L."/>
            <person name="Mann K."/>
            <person name="Deutzmann R."/>
            <person name="Pribula-Conway D."/>
            <person name="Hsu-Chen C.-C."/>
            <person name="Bernard M.P."/>
            <person name="Timpl R."/>
        </authorList>
    </citation>
    <scope>NUCLEOTIDE SEQUENCE [MRNA] OF 422-482</scope>
</reference>
<reference key="9">
    <citation type="journal article" date="1988" name="Am. J. Hum. Genet.">
        <title>Cloning and chromosomal localization of human genes encoding the three chains of type VI collagen.</title>
        <authorList>
            <person name="Weil D."/>
            <person name="Mattei M.-G."/>
            <person name="Passage E."/>
            <person name="N'Guyen V.C."/>
            <person name="Pribula-Conway D."/>
            <person name="Mann K."/>
            <person name="Deutzmann R."/>
            <person name="Timpl R."/>
            <person name="Chu M.-L."/>
        </authorList>
    </citation>
    <scope>NUCLEOTIDE SEQUENCE [MRNA] OF 422-481</scope>
    <source>
        <tissue>Placenta</tissue>
    </source>
</reference>
<reference key="10">
    <citation type="submission" date="2008-12" db="UniProtKB">
        <authorList>
            <person name="Lubec G."/>
            <person name="Chen W.-Q."/>
            <person name="Sun Y."/>
        </authorList>
    </citation>
    <scope>PROTEIN SEQUENCE OF 693-711; 737-757; 939-957 AND 991-1005</scope>
    <scope>IDENTIFICATION BY MASS SPECTROMETRY</scope>
    <source>
        <tissue>Fetal brain cortex</tissue>
    </source>
</reference>
<reference key="11">
    <citation type="journal article" date="2009" name="J. Proteome Res.">
        <title>Glycoproteomics analysis of human liver tissue by combination of multiple enzyme digestion and hydrazide chemistry.</title>
        <authorList>
            <person name="Chen R."/>
            <person name="Jiang X."/>
            <person name="Sun D."/>
            <person name="Han G."/>
            <person name="Wang F."/>
            <person name="Ye M."/>
            <person name="Wang L."/>
            <person name="Zou H."/>
        </authorList>
    </citation>
    <scope>GLYCOSYLATION [LARGE SCALE ANALYSIS] AT ASN-212; ASN-516; ASN-804 AND ASN-896</scope>
    <source>
        <tissue>Liver</tissue>
    </source>
</reference>
<reference key="12">
    <citation type="journal article" date="2011" name="BMC Syst. Biol.">
        <title>Initial characterization of the human central proteome.</title>
        <authorList>
            <person name="Burkard T.R."/>
            <person name="Planyavsky M."/>
            <person name="Kaupe I."/>
            <person name="Breitwieser F.P."/>
            <person name="Buerckstuemmer T."/>
            <person name="Bennett K.L."/>
            <person name="Superti-Furga G."/>
            <person name="Colinge J."/>
        </authorList>
    </citation>
    <scope>IDENTIFICATION BY MASS SPECTROMETRY [LARGE SCALE ANALYSIS]</scope>
</reference>
<reference key="13">
    <citation type="journal article" date="2012" name="J. Proteome Res.">
        <title>Resveratrol-induced changes of the human adipocyte secretion profile.</title>
        <authorList>
            <person name="Rosenow A."/>
            <person name="Noben J.P."/>
            <person name="Jocken J."/>
            <person name="Kallendrusch S."/>
            <person name="Fischer-Posovszky P."/>
            <person name="Mariman E.C."/>
            <person name="Renes J."/>
        </authorList>
    </citation>
    <scope>IDENTIFICATION BY MASS SPECTROMETRY [LARGE SCALE ANALYSIS]</scope>
</reference>
<reference key="14">
    <citation type="journal article" date="2014" name="J. Proteomics">
        <title>An enzyme assisted RP-RPLC approach for in-depth analysis of human liver phosphoproteome.</title>
        <authorList>
            <person name="Bian Y."/>
            <person name="Song C."/>
            <person name="Cheng K."/>
            <person name="Dong M."/>
            <person name="Wang F."/>
            <person name="Huang J."/>
            <person name="Sun D."/>
            <person name="Wang L."/>
            <person name="Ye M."/>
            <person name="Zou H."/>
        </authorList>
    </citation>
    <scope>IDENTIFICATION BY MASS SPECTROMETRY [LARGE SCALE ANALYSIS]</scope>
    <source>
        <tissue>Liver</tissue>
    </source>
</reference>
<reference key="15">
    <citation type="journal article" date="1996" name="Nat. Genet.">
        <title>Type VI collagen mutations in Bethlem myopathy, an autosomal dominant myopathy with contractures.</title>
        <authorList>
            <person name="Joebsis G.J."/>
            <person name="Keizers H."/>
            <person name="Vreijling J.P."/>
            <person name="de Visser M."/>
            <person name="Speer M.C."/>
            <person name="Wolterman R.A."/>
            <person name="Baas F."/>
            <person name="Bohlhuis P.A."/>
        </authorList>
    </citation>
    <scope>VARIANT BTHLM1A VAL-305</scope>
</reference>
<reference key="16">
    <citation type="journal article" date="2002" name="Neurology">
        <title>Novel mutations in collagen VI genes: expansion of the Bethlem myopathy phenotype.</title>
        <authorList>
            <person name="Scacheri P.C."/>
            <person name="Gillanders E.M."/>
            <person name="Subramony S.H."/>
            <person name="Vedanarayanan V."/>
            <person name="Crowe C.A."/>
            <person name="Thakore N."/>
            <person name="Bingler M."/>
            <person name="Hoffman E.P."/>
        </authorList>
    </citation>
    <scope>VARIANTS BTHLM1A ARG-121 AND ASP-341</scope>
</reference>
<reference key="17">
    <citation type="journal article" date="2005" name="Ann. Neurol.">
        <title>Dominant and recessive COL6A1 mutations in Ullrich scleroatonic muscular dystrophy.</title>
        <authorList>
            <person name="Giusti B."/>
            <person name="Lucarini L."/>
            <person name="Pietroni V."/>
            <person name="Lucioli S."/>
            <person name="Bandinelli B."/>
            <person name="Sabatelli P."/>
            <person name="Squarzoni S."/>
            <person name="Petrini S."/>
            <person name="Gartioux C."/>
            <person name="Talim B."/>
            <person name="Roelens F."/>
            <person name="Merlini L."/>
            <person name="Topaloglu H."/>
            <person name="Bertini E."/>
            <person name="Guicheney P."/>
            <person name="Pepe G."/>
        </authorList>
    </citation>
    <scope>VARIANTS UCMD1A ARG-284 AND ARG-290</scope>
    <scope>VARIANTS ASN-116 AND LEU-890</scope>
</reference>
<reference key="18">
    <citation type="journal article" date="2005" name="J. Med. Genet.">
        <title>Automated genomic sequence analysis of the three collagen VI genes: applications to Ullrich congenital muscular dystrophy and Bethlem myopathy.</title>
        <authorList>
            <person name="Lampe A.K."/>
            <person name="Dunn D.M."/>
            <person name="von Niederhausern A.C."/>
            <person name="Hamil C."/>
            <person name="Aoyagi A."/>
            <person name="Laval S.H."/>
            <person name="Marie S.K."/>
            <person name="Chu M.-L."/>
            <person name="Swoboda K."/>
            <person name="Muntoni F."/>
            <person name="Bonnemann C.G."/>
            <person name="Flanigan K.M."/>
            <person name="Bushby K.M.D."/>
            <person name="Weiss R.B."/>
        </authorList>
    </citation>
    <scope>VARIANTS BTHLM1A LEU-274; ARG-290; VAL-341 AND THR-571</scope>
    <scope>VARIANTS UCMD1A ARG-281 AND ARG-284</scope>
    <scope>VARIANTS ASN-116; HIS-850; MET-881 AND LEU-890</scope>
</reference>
<reference key="19">
    <citation type="journal article" date="2005" name="Neurology">
        <title>Detection of common and private mutations in the COL6A1 gene of patients with Bethlem myopathy.</title>
        <authorList>
            <person name="Lucioli S."/>
            <person name="Giusti B."/>
            <person name="Mercuri E."/>
            <person name="Vanegas O.C."/>
            <person name="Lucarini L."/>
            <person name="Pietroni V."/>
            <person name="Urtizberea A."/>
            <person name="Ben Yaou R."/>
            <person name="de Visser M."/>
            <person name="van der Kooi A.J."/>
            <person name="Boennemann C."/>
            <person name="Iannaccone S.T."/>
            <person name="Merlini L."/>
            <person name="Bushby K."/>
            <person name="Muntoni F."/>
            <person name="Bertini E."/>
            <person name="Chu M.-L."/>
            <person name="Pepe G."/>
        </authorList>
    </citation>
    <scope>VARIANTS BTHLM1A ASP-272; ARG-275; ARG-290 AND VAL-341</scope>
</reference>
<reference key="20">
    <citation type="journal article" date="2007" name="Neurology">
        <title>Reduced cell anchorage may cause sarcolemma-specific collagen VI deficiency in Ullrich disease.</title>
        <authorList>
            <person name="Kawahara G."/>
            <person name="Okada M."/>
            <person name="Morone N."/>
            <person name="Ibarra C.A."/>
            <person name="Nonaka I."/>
            <person name="Noguchi S."/>
            <person name="Hayashi Y.K."/>
            <person name="Nishino I."/>
        </authorList>
    </citation>
    <scope>CHARACTERIZATION OF VARIANT UCMD1A ARG-284</scope>
</reference>
<reference key="21">
    <citation type="journal article" date="2018" name="Physiol. Genomics">
        <title>The impact of PYROXD1 deficiency on cellular respiration and correlations with genetic analyses of limb-girdle muscular dystrophy in Saudi Arabia and Sudan.</title>
        <authorList>
            <person name="Saha M."/>
            <person name="Reddy H.M."/>
            <person name="Salih M."/>
            <person name="Estrella E."/>
            <person name="Jones M.D."/>
            <person name="Mitsuhashi S."/>
            <person name="Cho K.A."/>
            <person name="Suzuki-Hatano S."/>
            <person name="Rizzo S.A."/>
            <person name="Hamad M.H."/>
            <person name="Mukhtar M.M."/>
            <person name="Hamed A.A."/>
            <person name="Elseed M.A."/>
            <person name="Lek M."/>
            <person name="Valkanas E."/>
            <person name="MacArthur D.G."/>
            <person name="Kunkel L.M."/>
            <person name="Pacak C.A."/>
            <person name="Draper I."/>
            <person name="Kang P.B."/>
        </authorList>
    </citation>
    <scope>VARIANT ALA-43</scope>
</reference>
<proteinExistence type="evidence at protein level"/>
<accession>P12109</accession>
<accession>O00117</accession>
<accession>O00118</accession>
<accession>Q14040</accession>
<accession>Q14041</accession>
<accession>Q16258</accession>
<accession>Q7Z645</accession>
<accession>Q9BSA8</accession>
<name>CO6A1_HUMAN</name>
<comment type="function">
    <text>Collagen VI acts as a cell-binding protein.</text>
</comment>
<comment type="subunit">
    <text>Trimers composed of three different chains: alpha-1(VI), alpha-2(VI), and alpha-3(VI) or alpha-5(VI) or alpha-6(VI).</text>
</comment>
<comment type="interaction">
    <interactant intactId="EBI-2465913">
        <id>P12109</id>
    </interactant>
    <interactant intactId="EBI-2528238">
        <id>P20849</id>
        <label>COL9A1</label>
    </interactant>
    <organismsDiffer>false</organismsDiffer>
    <experiments>2</experiments>
</comment>
<comment type="subcellular location">
    <subcellularLocation>
        <location evidence="1">Secreted</location>
        <location evidence="1">Extracellular space</location>
        <location evidence="1">Extracellular matrix</location>
    </subcellularLocation>
</comment>
<comment type="PTM">
    <text>Prolines at the third position of the tripeptide repeating unit (G-X-Y) are hydroxylated in some or all of the chains.</text>
</comment>
<comment type="disease" evidence="5 6 7 12">
    <disease id="DI-00188">
        <name>Bethlem myopathy 1A</name>
        <acronym>BTHLM1A</acronym>
        <description>A form of Bethlem myopathy, a slowly progressive muscular dystrophy characterized by joint contractures, most frequently affecting the elbows and ankles, and muscle weakness and wasting involving the proximal and extensor muscles more than the distal and flexor ones. The clinical onset more often occurs in childhood or adulthood, but it can be prenatal with decreased fetal movements or neonatal with hypotonia. The hallmark of Bethlem myopathy is long finger flexion contractures. Inheritance can be autosomal dominant or autosomal recessive.</description>
        <dbReference type="MIM" id="158810"/>
    </disease>
    <text>The disease is caused by variants affecting the gene represented in this entry.</text>
</comment>
<comment type="disease" evidence="6 8 9">
    <disease id="DI-01110">
        <name>Ullrich congenital muscular dystrophy 1A</name>
        <acronym>UCMD1A</acronym>
        <description>A form of Ullrich congenital muscular dystrophy, a disease characterized by generalized muscle weakness and striking hypermobility of distal joints in conjunction with variable contractures of more proximal joints and normal intelligence. Additional findings may include kyphoscoliosis, protruded calcanei, and follicular hyperkeratosis (rough skin). More severely affected patients manifest at birth and never achieve independent ambulation, while patients with milder phenotypes might maintain ambulation into adulthood. Inheritance can be autosomal dominant or autosomal recessive.</description>
        <dbReference type="MIM" id="254090"/>
    </disease>
    <text>The disease is caused by variants affecting the gene represented in this entry.</text>
</comment>
<comment type="similarity">
    <text evidence="13">Belongs to the type VI collagen family.</text>
</comment>